<comment type="function">
    <text evidence="1">Binds directly to 23S ribosomal RNA and is necessary for the in vitro assembly process of the 50S ribosomal subunit. It is not involved in the protein synthesizing functions of that subunit.</text>
</comment>
<comment type="similarity">
    <text evidence="1">Belongs to the bacterial ribosomal protein bL20 family.</text>
</comment>
<accession>B4RSL5</accession>
<accession>F2G8J0</accession>
<gene>
    <name evidence="1" type="primary">rplT</name>
    <name type="ordered locus">MADE_1008095</name>
</gene>
<protein>
    <recommendedName>
        <fullName evidence="1">Large ribosomal subunit protein bL20</fullName>
    </recommendedName>
    <alternativeName>
        <fullName evidence="2">50S ribosomal protein L20</fullName>
    </alternativeName>
</protein>
<evidence type="ECO:0000255" key="1">
    <source>
        <dbReference type="HAMAP-Rule" id="MF_00382"/>
    </source>
</evidence>
<evidence type="ECO:0000305" key="2"/>
<sequence length="118" mass="13348">MARVKRGTIARARHKKVLKQAKGYYGARSRVYRVAVQAVTKAGQYAYRDRRQRKRQFRQLWIARINAAARQNGMSYSRFINGLKKASVEIDRKILADIAVHDKAAFSALVEAAKGALA</sequence>
<feature type="chain" id="PRO_1000122266" description="Large ribosomal subunit protein bL20">
    <location>
        <begin position="1"/>
        <end position="118"/>
    </location>
</feature>
<reference key="1">
    <citation type="journal article" date="2008" name="ISME J.">
        <title>Comparative genomics of two ecotypes of the marine planktonic copiotroph Alteromonas macleodii suggests alternative lifestyles associated with different kinds of particulate organic matter.</title>
        <authorList>
            <person name="Ivars-Martinez E."/>
            <person name="Martin-Cuadrado A.-B."/>
            <person name="D'Auria G."/>
            <person name="Mira A."/>
            <person name="Ferriera S."/>
            <person name="Johnson J."/>
            <person name="Friedman R."/>
            <person name="Rodriguez-Valera F."/>
        </authorList>
    </citation>
    <scope>NUCLEOTIDE SEQUENCE [LARGE SCALE GENOMIC DNA]</scope>
    <source>
        <strain>DSM 17117 / CIP 110805 / LMG 28347 / Deep ecotype</strain>
    </source>
</reference>
<name>RL20_ALTMD</name>
<dbReference type="EMBL" id="CP001103">
    <property type="protein sequence ID" value="AEA97759.1"/>
    <property type="molecule type" value="Genomic_DNA"/>
</dbReference>
<dbReference type="RefSeq" id="WP_012518092.1">
    <property type="nucleotide sequence ID" value="NC_011138.3"/>
</dbReference>
<dbReference type="SMR" id="B4RSL5"/>
<dbReference type="GeneID" id="78254864"/>
<dbReference type="KEGG" id="amc:MADE_1008095"/>
<dbReference type="HOGENOM" id="CLU_123265_0_1_6"/>
<dbReference type="Proteomes" id="UP000001870">
    <property type="component" value="Chromosome"/>
</dbReference>
<dbReference type="GO" id="GO:1990904">
    <property type="term" value="C:ribonucleoprotein complex"/>
    <property type="evidence" value="ECO:0007669"/>
    <property type="project" value="UniProtKB-KW"/>
</dbReference>
<dbReference type="GO" id="GO:0005840">
    <property type="term" value="C:ribosome"/>
    <property type="evidence" value="ECO:0007669"/>
    <property type="project" value="UniProtKB-KW"/>
</dbReference>
<dbReference type="GO" id="GO:0019843">
    <property type="term" value="F:rRNA binding"/>
    <property type="evidence" value="ECO:0007669"/>
    <property type="project" value="UniProtKB-UniRule"/>
</dbReference>
<dbReference type="GO" id="GO:0003735">
    <property type="term" value="F:structural constituent of ribosome"/>
    <property type="evidence" value="ECO:0007669"/>
    <property type="project" value="InterPro"/>
</dbReference>
<dbReference type="GO" id="GO:0000027">
    <property type="term" value="P:ribosomal large subunit assembly"/>
    <property type="evidence" value="ECO:0007669"/>
    <property type="project" value="UniProtKB-UniRule"/>
</dbReference>
<dbReference type="GO" id="GO:0006412">
    <property type="term" value="P:translation"/>
    <property type="evidence" value="ECO:0007669"/>
    <property type="project" value="InterPro"/>
</dbReference>
<dbReference type="CDD" id="cd07026">
    <property type="entry name" value="Ribosomal_L20"/>
    <property type="match status" value="1"/>
</dbReference>
<dbReference type="FunFam" id="1.10.1900.20:FF:000001">
    <property type="entry name" value="50S ribosomal protein L20"/>
    <property type="match status" value="1"/>
</dbReference>
<dbReference type="Gene3D" id="6.10.160.10">
    <property type="match status" value="1"/>
</dbReference>
<dbReference type="Gene3D" id="1.10.1900.20">
    <property type="entry name" value="Ribosomal protein L20"/>
    <property type="match status" value="1"/>
</dbReference>
<dbReference type="HAMAP" id="MF_00382">
    <property type="entry name" value="Ribosomal_bL20"/>
    <property type="match status" value="1"/>
</dbReference>
<dbReference type="InterPro" id="IPR005813">
    <property type="entry name" value="Ribosomal_bL20"/>
</dbReference>
<dbReference type="InterPro" id="IPR049946">
    <property type="entry name" value="RIBOSOMAL_L20_CS"/>
</dbReference>
<dbReference type="InterPro" id="IPR035566">
    <property type="entry name" value="Ribosomal_protein_bL20_C"/>
</dbReference>
<dbReference type="NCBIfam" id="TIGR01032">
    <property type="entry name" value="rplT_bact"/>
    <property type="match status" value="1"/>
</dbReference>
<dbReference type="PANTHER" id="PTHR10986">
    <property type="entry name" value="39S RIBOSOMAL PROTEIN L20"/>
    <property type="match status" value="1"/>
</dbReference>
<dbReference type="Pfam" id="PF00453">
    <property type="entry name" value="Ribosomal_L20"/>
    <property type="match status" value="1"/>
</dbReference>
<dbReference type="PRINTS" id="PR00062">
    <property type="entry name" value="RIBOSOMALL20"/>
</dbReference>
<dbReference type="SUPFAM" id="SSF74731">
    <property type="entry name" value="Ribosomal protein L20"/>
    <property type="match status" value="1"/>
</dbReference>
<dbReference type="PROSITE" id="PS00937">
    <property type="entry name" value="RIBOSOMAL_L20"/>
    <property type="match status" value="1"/>
</dbReference>
<proteinExistence type="inferred from homology"/>
<organism>
    <name type="scientific">Alteromonas mediterranea (strain DSM 17117 / CIP 110805 / LMG 28347 / Deep ecotype)</name>
    <dbReference type="NCBI Taxonomy" id="1774373"/>
    <lineage>
        <taxon>Bacteria</taxon>
        <taxon>Pseudomonadati</taxon>
        <taxon>Pseudomonadota</taxon>
        <taxon>Gammaproteobacteria</taxon>
        <taxon>Alteromonadales</taxon>
        <taxon>Alteromonadaceae</taxon>
        <taxon>Alteromonas/Salinimonas group</taxon>
        <taxon>Alteromonas</taxon>
    </lineage>
</organism>
<keyword id="KW-0687">Ribonucleoprotein</keyword>
<keyword id="KW-0689">Ribosomal protein</keyword>
<keyword id="KW-0694">RNA-binding</keyword>
<keyword id="KW-0699">rRNA-binding</keyword>